<keyword id="KW-0240">DNA-directed RNA polymerase</keyword>
<keyword id="KW-0548">Nucleotidyltransferase</keyword>
<keyword id="KW-1185">Reference proteome</keyword>
<keyword id="KW-0804">Transcription</keyword>
<keyword id="KW-0808">Transferase</keyword>
<evidence type="ECO:0000255" key="1">
    <source>
        <dbReference type="HAMAP-Rule" id="MF_00357"/>
    </source>
</evidence>
<evidence type="ECO:0000255" key="2">
    <source>
        <dbReference type="PROSITE-ProRule" id="PRU01261"/>
    </source>
</evidence>
<evidence type="ECO:0000256" key="3">
    <source>
        <dbReference type="SAM" id="MobiDB-lite"/>
    </source>
</evidence>
<evidence type="ECO:0000305" key="4"/>
<protein>
    <recommendedName>
        <fullName evidence="1">Probable DNA-directed RNA polymerase subunit delta</fullName>
    </recommendedName>
    <alternativeName>
        <fullName evidence="1">RNAP delta factor</fullName>
    </alternativeName>
</protein>
<gene>
    <name evidence="1" type="primary">rpoE</name>
    <name type="ordered locus">SMU_96</name>
</gene>
<comment type="function">
    <text evidence="1">Participates in both the initiation and recycling phases of transcription. In the presence of the delta subunit, RNAP displays an increased specificity of transcription, a decreased affinity for nucleic acids, and an increased efficiency of RNA synthesis because of enhanced recycling.</text>
</comment>
<comment type="subunit">
    <text evidence="1">RNAP is composed of a core of 2 alpha, a beta and a beta' subunits. The core is associated with a delta subunit and one of several sigma factors.</text>
</comment>
<comment type="similarity">
    <text evidence="1">Belongs to the RpoE family.</text>
</comment>
<comment type="sequence caution" evidence="4">
    <conflict type="erroneous initiation">
        <sequence resource="EMBL-CDS" id="AAN57879"/>
    </conflict>
</comment>
<reference key="1">
    <citation type="journal article" date="2002" name="Proc. Natl. Acad. Sci. U.S.A.">
        <title>Genome sequence of Streptococcus mutans UA159, a cariogenic dental pathogen.</title>
        <authorList>
            <person name="Ajdic D.J."/>
            <person name="McShan W.M."/>
            <person name="McLaughlin R.E."/>
            <person name="Savic G."/>
            <person name="Chang J."/>
            <person name="Carson M.B."/>
            <person name="Primeaux C."/>
            <person name="Tian R."/>
            <person name="Kenton S."/>
            <person name="Jia H.G."/>
            <person name="Lin S.P."/>
            <person name="Qian Y."/>
            <person name="Li S."/>
            <person name="Zhu H."/>
            <person name="Najar F.Z."/>
            <person name="Lai H."/>
            <person name="White J."/>
            <person name="Roe B.A."/>
            <person name="Ferretti J.J."/>
        </authorList>
    </citation>
    <scope>NUCLEOTIDE SEQUENCE [LARGE SCALE GENOMIC DNA]</scope>
    <source>
        <strain>ATCC 700610 / UA159</strain>
    </source>
</reference>
<proteinExistence type="inferred from homology"/>
<dbReference type="EMBL" id="AE014133">
    <property type="protein sequence ID" value="AAN57879.1"/>
    <property type="status" value="ALT_INIT"/>
    <property type="molecule type" value="Genomic_DNA"/>
</dbReference>
<dbReference type="RefSeq" id="NP_720573.3">
    <property type="nucleotide sequence ID" value="NC_004350.2"/>
</dbReference>
<dbReference type="RefSeq" id="WP_002263574.1">
    <property type="nucleotide sequence ID" value="NC_004350.2"/>
</dbReference>
<dbReference type="SMR" id="Q8DWG2"/>
<dbReference type="STRING" id="210007.SMU_96"/>
<dbReference type="KEGG" id="smu:SMU_96"/>
<dbReference type="PATRIC" id="fig|210007.7.peg.82"/>
<dbReference type="eggNOG" id="COG3343">
    <property type="taxonomic scope" value="Bacteria"/>
</dbReference>
<dbReference type="HOGENOM" id="CLU_116648_1_0_9"/>
<dbReference type="OrthoDB" id="401223at2"/>
<dbReference type="PhylomeDB" id="Q8DWG2"/>
<dbReference type="Proteomes" id="UP000002512">
    <property type="component" value="Chromosome"/>
</dbReference>
<dbReference type="GO" id="GO:0000428">
    <property type="term" value="C:DNA-directed RNA polymerase complex"/>
    <property type="evidence" value="ECO:0007669"/>
    <property type="project" value="UniProtKB-KW"/>
</dbReference>
<dbReference type="GO" id="GO:0003899">
    <property type="term" value="F:DNA-directed RNA polymerase activity"/>
    <property type="evidence" value="ECO:0007669"/>
    <property type="project" value="UniProtKB-UniRule"/>
</dbReference>
<dbReference type="GO" id="GO:0006351">
    <property type="term" value="P:DNA-templated transcription"/>
    <property type="evidence" value="ECO:0007669"/>
    <property type="project" value="InterPro"/>
</dbReference>
<dbReference type="GO" id="GO:0006355">
    <property type="term" value="P:regulation of DNA-templated transcription"/>
    <property type="evidence" value="ECO:0007669"/>
    <property type="project" value="UniProtKB-UniRule"/>
</dbReference>
<dbReference type="Gene3D" id="1.10.10.1250">
    <property type="entry name" value="RNA polymerase, subunit delta, N-terminal domain"/>
    <property type="match status" value="1"/>
</dbReference>
<dbReference type="HAMAP" id="MF_00357">
    <property type="entry name" value="RNApol_bact_RpoE"/>
    <property type="match status" value="1"/>
</dbReference>
<dbReference type="InterPro" id="IPR007759">
    <property type="entry name" value="Asxl_HARE-HTH"/>
</dbReference>
<dbReference type="InterPro" id="IPR038087">
    <property type="entry name" value="RNAP_delta_N_dom_sf"/>
</dbReference>
<dbReference type="InterPro" id="IPR029757">
    <property type="entry name" value="RpoE"/>
</dbReference>
<dbReference type="NCBIfam" id="TIGR04567">
    <property type="entry name" value="RNAP_delt_lowGC"/>
    <property type="match status" value="1"/>
</dbReference>
<dbReference type="Pfam" id="PF05066">
    <property type="entry name" value="HARE-HTH"/>
    <property type="match status" value="1"/>
</dbReference>
<dbReference type="PROSITE" id="PS51913">
    <property type="entry name" value="HTH_HARE"/>
    <property type="match status" value="1"/>
</dbReference>
<organism>
    <name type="scientific">Streptococcus mutans serotype c (strain ATCC 700610 / UA159)</name>
    <dbReference type="NCBI Taxonomy" id="210007"/>
    <lineage>
        <taxon>Bacteria</taxon>
        <taxon>Bacillati</taxon>
        <taxon>Bacillota</taxon>
        <taxon>Bacilli</taxon>
        <taxon>Lactobacillales</taxon>
        <taxon>Streptococcaceae</taxon>
        <taxon>Streptococcus</taxon>
    </lineage>
</organism>
<feature type="chain" id="PRO_0000204328" description="Probable DNA-directed RNA polymerase subunit delta">
    <location>
        <begin position="1"/>
        <end position="194"/>
    </location>
</feature>
<feature type="domain" description="HTH HARE-type" evidence="2">
    <location>
        <begin position="14"/>
        <end position="83"/>
    </location>
</feature>
<feature type="region of interest" description="Disordered" evidence="3">
    <location>
        <begin position="117"/>
        <end position="194"/>
    </location>
</feature>
<sequence>MELEVFAGQEKSELSMIEVARAILEERGRDKEMYFSDLVNAIQVYLEKSDADIREALPFFYSDLNTDGSFIPLGENKWGLRSWYGIDEIDEEIVTLEEDEDGAPKHKRKRVNAFMDGDEDAIDYSDDDPEDESFNTAEEDTEYDEEDPDDEKSEVESYDSEINEIIPDEDLDENVDLDEEDDDYSDDEEDEEGE</sequence>
<accession>Q8DWG2</accession>
<name>RPOE_STRMU</name>